<comment type="function">
    <text>Catalyzes the sequential condensation of isopentenyl pyrophosphate with the allylic pyrophosphates, dimethylallyl pyrophosphate, and then with the resultant geranylpyrophosphate to the ultimate product farnesyl pyrophosphate.</text>
</comment>
<comment type="catalytic activity">
    <reaction>
        <text>isopentenyl diphosphate + dimethylallyl diphosphate = (2E)-geranyl diphosphate + diphosphate</text>
        <dbReference type="Rhea" id="RHEA:22408"/>
        <dbReference type="ChEBI" id="CHEBI:33019"/>
        <dbReference type="ChEBI" id="CHEBI:57623"/>
        <dbReference type="ChEBI" id="CHEBI:58057"/>
        <dbReference type="ChEBI" id="CHEBI:128769"/>
        <dbReference type="EC" id="2.5.1.1"/>
    </reaction>
</comment>
<comment type="catalytic activity">
    <reaction>
        <text>isopentenyl diphosphate + (2E)-geranyl diphosphate = (2E,6E)-farnesyl diphosphate + diphosphate</text>
        <dbReference type="Rhea" id="RHEA:19361"/>
        <dbReference type="ChEBI" id="CHEBI:33019"/>
        <dbReference type="ChEBI" id="CHEBI:58057"/>
        <dbReference type="ChEBI" id="CHEBI:128769"/>
        <dbReference type="ChEBI" id="CHEBI:175763"/>
        <dbReference type="EC" id="2.5.1.10"/>
    </reaction>
</comment>
<comment type="cofactor">
    <cofactor evidence="1">
        <name>Mg(2+)</name>
        <dbReference type="ChEBI" id="CHEBI:18420"/>
    </cofactor>
    <text evidence="1">Binds 2 Mg(2+) ions per subunit.</text>
</comment>
<comment type="pathway">
    <text>Isoprenoid biosynthesis; farnesyl diphosphate biosynthesis; farnesyl diphosphate from geranyl diphosphate and isopentenyl diphosphate: step 1/1.</text>
</comment>
<comment type="pathway">
    <text>Isoprenoid biosynthesis; geranyl diphosphate biosynthesis; geranyl diphosphate from dimethylallyl diphosphate and isopentenyl diphosphate: step 1/1.</text>
</comment>
<comment type="subcellular location">
    <subcellularLocation>
        <location>Mitochondrion</location>
    </subcellularLocation>
    <subcellularLocation>
        <location>Cytoplasm</location>
    </subcellularLocation>
</comment>
<comment type="alternative products">
    <event type="alternative initiation"/>
    <isoform>
        <id>Q09152-1</id>
        <name>Mitochondrial</name>
        <name>FPS1L</name>
        <sequence type="displayed"/>
    </isoform>
    <isoform>
        <id>Q09152-2</id>
        <name>Cytoplasmic</name>
        <name>FPS1S</name>
        <sequence type="described" ref="VSP_018808"/>
    </isoform>
</comment>
<comment type="tissue specificity">
    <text>The FPS1L mRNA accumulates preferentially in inflorescences, whereas the FPS1S mRNA is predominantly expressed in roots and inflorescences.</text>
</comment>
<comment type="similarity">
    <text evidence="4">Belongs to the FPP/GGPP synthase family.</text>
</comment>
<name>FPPS1_ARATH</name>
<dbReference type="EC" id="2.5.1.10"/>
<dbReference type="EC" id="2.5.1.1"/>
<dbReference type="EMBL" id="U80605">
    <property type="protein sequence ID" value="AAB49290.1"/>
    <property type="molecule type" value="mRNA"/>
</dbReference>
<dbReference type="EMBL" id="L46367">
    <property type="protein sequence ID" value="AAF44787.1"/>
    <property type="molecule type" value="Genomic_DNA"/>
</dbReference>
<dbReference type="EMBL" id="L46367">
    <property type="protein sequence ID" value="AAB07264.1"/>
    <property type="molecule type" value="Genomic_DNA"/>
</dbReference>
<dbReference type="EMBL" id="AB016886">
    <property type="protein sequence ID" value="BAB11324.1"/>
    <property type="molecule type" value="Genomic_DNA"/>
</dbReference>
<dbReference type="EMBL" id="CP002688">
    <property type="protein sequence ID" value="AED95570.1"/>
    <property type="molecule type" value="Genomic_DNA"/>
</dbReference>
<dbReference type="EMBL" id="AF370324">
    <property type="protein sequence ID" value="AAK44139.1"/>
    <property type="molecule type" value="mRNA"/>
</dbReference>
<dbReference type="EMBL" id="AY063112">
    <property type="protein sequence ID" value="AAL34286.1"/>
    <property type="molecule type" value="mRNA"/>
</dbReference>
<dbReference type="EMBL" id="X75789">
    <property type="protein sequence ID" value="CAA53433.1"/>
    <property type="molecule type" value="mRNA"/>
</dbReference>
<dbReference type="PIR" id="S52009">
    <property type="entry name" value="S52009"/>
</dbReference>
<dbReference type="RefSeq" id="NP_199588.1">
    <molecule id="Q09152-1"/>
    <property type="nucleotide sequence ID" value="NM_124151.3"/>
</dbReference>
<dbReference type="SMR" id="Q09152"/>
<dbReference type="BioGRID" id="20076">
    <property type="interactions" value="2"/>
</dbReference>
<dbReference type="FunCoup" id="Q09152">
    <property type="interactions" value="3365"/>
</dbReference>
<dbReference type="STRING" id="3702.Q09152"/>
<dbReference type="iPTMnet" id="Q09152"/>
<dbReference type="PaxDb" id="3702-AT5G47770.1"/>
<dbReference type="ProteomicsDB" id="247377">
    <molecule id="Q09152-1"/>
</dbReference>
<dbReference type="EnsemblPlants" id="AT5G47770.1">
    <molecule id="Q09152-1"/>
    <property type="protein sequence ID" value="AT5G47770.1"/>
    <property type="gene ID" value="AT5G47770"/>
</dbReference>
<dbReference type="GeneID" id="834828"/>
<dbReference type="Gramene" id="AT5G47770.1">
    <molecule id="Q09152-1"/>
    <property type="protein sequence ID" value="AT5G47770.1"/>
    <property type="gene ID" value="AT5G47770"/>
</dbReference>
<dbReference type="KEGG" id="ath:AT5G47770"/>
<dbReference type="Araport" id="AT5G47770"/>
<dbReference type="TAIR" id="AT5G47770">
    <property type="gene designation" value="FPS1"/>
</dbReference>
<dbReference type="eggNOG" id="KOG0711">
    <property type="taxonomic scope" value="Eukaryota"/>
</dbReference>
<dbReference type="HOGENOM" id="CLU_028376_3_0_1"/>
<dbReference type="InParanoid" id="Q09152"/>
<dbReference type="OMA" id="MGWFVEL"/>
<dbReference type="PhylomeDB" id="Q09152"/>
<dbReference type="BioCyc" id="ARA:AT5G47770-MONOMER"/>
<dbReference type="BioCyc" id="MetaCyc:AT5G47770-MONOMER"/>
<dbReference type="UniPathway" id="UPA00259">
    <property type="reaction ID" value="UER00368"/>
</dbReference>
<dbReference type="UniPathway" id="UPA00260">
    <property type="reaction ID" value="UER00369"/>
</dbReference>
<dbReference type="CD-CODE" id="4299E36E">
    <property type="entry name" value="Nucleolus"/>
</dbReference>
<dbReference type="PRO" id="PR:Q09152"/>
<dbReference type="Proteomes" id="UP000006548">
    <property type="component" value="Chromosome 5"/>
</dbReference>
<dbReference type="ExpressionAtlas" id="Q09152">
    <property type="expression patterns" value="baseline and differential"/>
</dbReference>
<dbReference type="GO" id="GO:0005829">
    <property type="term" value="C:cytosol"/>
    <property type="evidence" value="ECO:0007005"/>
    <property type="project" value="TAIR"/>
</dbReference>
<dbReference type="GO" id="GO:0005739">
    <property type="term" value="C:mitochondrion"/>
    <property type="evidence" value="ECO:0007669"/>
    <property type="project" value="UniProtKB-SubCell"/>
</dbReference>
<dbReference type="GO" id="GO:0009536">
    <property type="term" value="C:plastid"/>
    <property type="evidence" value="ECO:0007005"/>
    <property type="project" value="TAIR"/>
</dbReference>
<dbReference type="GO" id="GO:0004337">
    <property type="term" value="F:(2E,6E)-farnesyl diphosphate synthase activity"/>
    <property type="evidence" value="ECO:0000314"/>
    <property type="project" value="TAIR"/>
</dbReference>
<dbReference type="GO" id="GO:0004161">
    <property type="term" value="F:dimethylallyltranstransferase activity"/>
    <property type="evidence" value="ECO:0000314"/>
    <property type="project" value="TAIR"/>
</dbReference>
<dbReference type="GO" id="GO:0046872">
    <property type="term" value="F:metal ion binding"/>
    <property type="evidence" value="ECO:0007669"/>
    <property type="project" value="UniProtKB-KW"/>
</dbReference>
<dbReference type="GO" id="GO:0006695">
    <property type="term" value="P:cholesterol biosynthetic process"/>
    <property type="evidence" value="ECO:0007669"/>
    <property type="project" value="UniProtKB-KW"/>
</dbReference>
<dbReference type="GO" id="GO:0045337">
    <property type="term" value="P:farnesyl diphosphate biosynthetic process"/>
    <property type="evidence" value="ECO:0000314"/>
    <property type="project" value="TAIR"/>
</dbReference>
<dbReference type="GO" id="GO:0033384">
    <property type="term" value="P:geranyl diphosphate biosynthetic process"/>
    <property type="evidence" value="ECO:0007669"/>
    <property type="project" value="UniProtKB-UniPathway"/>
</dbReference>
<dbReference type="CDD" id="cd00685">
    <property type="entry name" value="Trans_IPPS_HT"/>
    <property type="match status" value="1"/>
</dbReference>
<dbReference type="FunFam" id="1.10.600.10:FF:000008">
    <property type="entry name" value="Farnesyl pyrophosphate synthase"/>
    <property type="match status" value="1"/>
</dbReference>
<dbReference type="Gene3D" id="1.10.600.10">
    <property type="entry name" value="Farnesyl Diphosphate Synthase"/>
    <property type="match status" value="1"/>
</dbReference>
<dbReference type="InterPro" id="IPR039702">
    <property type="entry name" value="FPS1-like"/>
</dbReference>
<dbReference type="InterPro" id="IPR008949">
    <property type="entry name" value="Isoprenoid_synthase_dom_sf"/>
</dbReference>
<dbReference type="InterPro" id="IPR000092">
    <property type="entry name" value="Polyprenyl_synt"/>
</dbReference>
<dbReference type="InterPro" id="IPR033749">
    <property type="entry name" value="Polyprenyl_synt_CS"/>
</dbReference>
<dbReference type="PANTHER" id="PTHR11525:SF0">
    <property type="entry name" value="FARNESYL PYROPHOSPHATE SYNTHASE"/>
    <property type="match status" value="1"/>
</dbReference>
<dbReference type="PANTHER" id="PTHR11525">
    <property type="entry name" value="FARNESYL-PYROPHOSPHATE SYNTHETASE"/>
    <property type="match status" value="1"/>
</dbReference>
<dbReference type="Pfam" id="PF00348">
    <property type="entry name" value="polyprenyl_synt"/>
    <property type="match status" value="1"/>
</dbReference>
<dbReference type="SFLD" id="SFLDS00005">
    <property type="entry name" value="Isoprenoid_Synthase_Type_I"/>
    <property type="match status" value="1"/>
</dbReference>
<dbReference type="SFLD" id="SFLDG01017">
    <property type="entry name" value="Polyprenyl_Transferase_Like"/>
    <property type="match status" value="1"/>
</dbReference>
<dbReference type="SUPFAM" id="SSF48576">
    <property type="entry name" value="Terpenoid synthases"/>
    <property type="match status" value="1"/>
</dbReference>
<dbReference type="PROSITE" id="PS00723">
    <property type="entry name" value="POLYPRENYL_SYNTHASE_1"/>
    <property type="match status" value="1"/>
</dbReference>
<dbReference type="PROSITE" id="PS00444">
    <property type="entry name" value="POLYPRENYL_SYNTHASE_2"/>
    <property type="match status" value="1"/>
</dbReference>
<organism>
    <name type="scientific">Arabidopsis thaliana</name>
    <name type="common">Mouse-ear cress</name>
    <dbReference type="NCBI Taxonomy" id="3702"/>
    <lineage>
        <taxon>Eukaryota</taxon>
        <taxon>Viridiplantae</taxon>
        <taxon>Streptophyta</taxon>
        <taxon>Embryophyta</taxon>
        <taxon>Tracheophyta</taxon>
        <taxon>Spermatophyta</taxon>
        <taxon>Magnoliopsida</taxon>
        <taxon>eudicotyledons</taxon>
        <taxon>Gunneridae</taxon>
        <taxon>Pentapetalae</taxon>
        <taxon>rosids</taxon>
        <taxon>malvids</taxon>
        <taxon>Brassicales</taxon>
        <taxon>Brassicaceae</taxon>
        <taxon>Camelineae</taxon>
        <taxon>Arabidopsis</taxon>
    </lineage>
</organism>
<evidence type="ECO:0000250" key="1"/>
<evidence type="ECO:0000250" key="2">
    <source>
        <dbReference type="UniProtKB" id="P14324"/>
    </source>
</evidence>
<evidence type="ECO:0000255" key="3"/>
<evidence type="ECO:0000305" key="4"/>
<reference key="1">
    <citation type="journal article" date="1997" name="J. Biol. Chem.">
        <title>The Arabidopsis thaliana FPS1 gene generates a novel mRNA that encodes a mitochondrial farnesyl-diphosphate synthase isoform.</title>
        <authorList>
            <person name="Cunillera N."/>
            <person name="Boronat A."/>
            <person name="Ferrer A."/>
        </authorList>
    </citation>
    <scope>NUCLEOTIDE SEQUENCE [MRNA]</scope>
    <scope>ALTERNATIVE INITIATION</scope>
    <source>
        <strain>cv. Columbia</strain>
    </source>
</reference>
<reference key="2">
    <citation type="journal article" date="1998" name="DNA Res.">
        <title>Structural analysis of Arabidopsis thaliana chromosome 5. VIII. Sequence features of the regions of 1,081,958 bp covered by seventeen physically assigned P1 and TAC clones.</title>
        <authorList>
            <person name="Asamizu E."/>
            <person name="Sato S."/>
            <person name="Kaneko T."/>
            <person name="Nakamura Y."/>
            <person name="Kotani H."/>
            <person name="Miyajima N."/>
            <person name="Tabata S."/>
        </authorList>
    </citation>
    <scope>NUCLEOTIDE SEQUENCE [LARGE SCALE GENOMIC DNA]</scope>
    <source>
        <strain>cv. Columbia</strain>
    </source>
</reference>
<reference key="3">
    <citation type="journal article" date="2017" name="Plant J.">
        <title>Araport11: a complete reannotation of the Arabidopsis thaliana reference genome.</title>
        <authorList>
            <person name="Cheng C.Y."/>
            <person name="Krishnakumar V."/>
            <person name="Chan A.P."/>
            <person name="Thibaud-Nissen F."/>
            <person name="Schobel S."/>
            <person name="Town C.D."/>
        </authorList>
    </citation>
    <scope>GENOME REANNOTATION</scope>
    <source>
        <strain>cv. Columbia</strain>
    </source>
</reference>
<reference key="4">
    <citation type="journal article" date="2003" name="Science">
        <title>Empirical analysis of transcriptional activity in the Arabidopsis genome.</title>
        <authorList>
            <person name="Yamada K."/>
            <person name="Lim J."/>
            <person name="Dale J.M."/>
            <person name="Chen H."/>
            <person name="Shinn P."/>
            <person name="Palm C.J."/>
            <person name="Southwick A.M."/>
            <person name="Wu H.C."/>
            <person name="Kim C.J."/>
            <person name="Nguyen M."/>
            <person name="Pham P.K."/>
            <person name="Cheuk R.F."/>
            <person name="Karlin-Newmann G."/>
            <person name="Liu S.X."/>
            <person name="Lam B."/>
            <person name="Sakano H."/>
            <person name="Wu T."/>
            <person name="Yu G."/>
            <person name="Miranda M."/>
            <person name="Quach H.L."/>
            <person name="Tripp M."/>
            <person name="Chang C.H."/>
            <person name="Lee J.M."/>
            <person name="Toriumi M.J."/>
            <person name="Chan M.M."/>
            <person name="Tang C.C."/>
            <person name="Onodera C.S."/>
            <person name="Deng J.M."/>
            <person name="Akiyama K."/>
            <person name="Ansari Y."/>
            <person name="Arakawa T."/>
            <person name="Banh J."/>
            <person name="Banno F."/>
            <person name="Bowser L."/>
            <person name="Brooks S.Y."/>
            <person name="Carninci P."/>
            <person name="Chao Q."/>
            <person name="Choy N."/>
            <person name="Enju A."/>
            <person name="Goldsmith A.D."/>
            <person name="Gurjal M."/>
            <person name="Hansen N.F."/>
            <person name="Hayashizaki Y."/>
            <person name="Johnson-Hopson C."/>
            <person name="Hsuan V.W."/>
            <person name="Iida K."/>
            <person name="Karnes M."/>
            <person name="Khan S."/>
            <person name="Koesema E."/>
            <person name="Ishida J."/>
            <person name="Jiang P.X."/>
            <person name="Jones T."/>
            <person name="Kawai J."/>
            <person name="Kamiya A."/>
            <person name="Meyers C."/>
            <person name="Nakajima M."/>
            <person name="Narusaka M."/>
            <person name="Seki M."/>
            <person name="Sakurai T."/>
            <person name="Satou M."/>
            <person name="Tamse R."/>
            <person name="Vaysberg M."/>
            <person name="Wallender E.K."/>
            <person name="Wong C."/>
            <person name="Yamamura Y."/>
            <person name="Yuan S."/>
            <person name="Shinozaki K."/>
            <person name="Davis R.W."/>
            <person name="Theologis A."/>
            <person name="Ecker J.R."/>
        </authorList>
    </citation>
    <scope>NUCLEOTIDE SEQUENCE [LARGE SCALE MRNA]</scope>
    <source>
        <strain>cv. Columbia</strain>
    </source>
</reference>
<reference key="5">
    <citation type="journal article" date="1994" name="Plant Mol. Biol.">
        <title>Cloning of an Arabidopsis thaliana cDNA coding for farnesyl diphosphate synthase by functional complementation in yeast.</title>
        <authorList>
            <person name="Delourme D."/>
            <person name="Lacroute F."/>
            <person name="Karst F."/>
        </authorList>
    </citation>
    <scope>NUCLEOTIDE SEQUENCE [MRNA] OF 42-384</scope>
    <source>
        <strain>cv. Landsberg erecta</strain>
    </source>
</reference>
<reference key="6">
    <citation type="journal article" date="1996" name="J. Biol. Chem.">
        <title>Arabidopsis thaliana contains two differentially expressed farnesyl-diphosphate synthase genes.</title>
        <authorList>
            <person name="Cunillera N."/>
            <person name="Arro M."/>
            <person name="Delourme D."/>
            <person name="Karst F."/>
            <person name="Boronat A."/>
            <person name="Ferrer A."/>
        </authorList>
    </citation>
    <scope>NUCLEOTIDE SEQUENCE [GENOMIC DNA / MRNA] OF 42-384</scope>
    <source>
        <strain>cv. Columbia</strain>
    </source>
</reference>
<protein>
    <recommendedName>
        <fullName>Farnesyl pyrophosphate synthase 1, mitochondrial</fullName>
        <shortName>FPP synthase 1</shortName>
        <shortName>FPS 1</shortName>
        <ecNumber>2.5.1.10</ecNumber>
    </recommendedName>
    <alternativeName>
        <fullName>(2E,6E)-farnesyl diphosphate synthase 1</fullName>
    </alternativeName>
    <alternativeName>
        <fullName>Dimethylallyltranstransferase 1</fullName>
        <ecNumber>2.5.1.1</ecNumber>
    </alternativeName>
    <alternativeName>
        <fullName>Farnesyl diphosphate synthase 1</fullName>
    </alternativeName>
    <alternativeName>
        <fullName>Geranyltranstransferase 1</fullName>
    </alternativeName>
</protein>
<accession>Q09152</accession>
<accession>Q42573</accession>
<accession>Q8W504</accession>
<accession>Q93Y84</accession>
<proteinExistence type="evidence at transcript level"/>
<sequence>MSVSCCCRNLGKTIKKAIPSHHLHLRSLGGSLYRRRIQSSSMETDLKSTFLNVYSVLKSDLLHDPSFEFTNESRLWVDRMLDYNVRGGKLNRGLSVVDSFKLLKQGNDLTEQEVFLSCALGWCIEWLQAYFLVLDDIMDNSVTRRGQPCWFRVPQVGMVAINDGILLRNHIHRILKKHFRDKPYYVDLVDLFNEVELQTACGQMIDLITTFEGEKDLAKYSLSIHRRIVQYKTAYYSFYLPVACALLMAGENLENHIDVKNVLVDMGIYFQVQDDYLDCFADPETLGKIGTDIEDFKCSWLVVKALERCSEEQTKILYENYGKPDPSNVAKVKDLYKELDLEGVFMEYESKSYEKLTGAIEGHQSKAIQAVLKSFLAKIYKRQK</sequence>
<gene>
    <name type="primary">FPS1</name>
    <name type="ordered locus">At5g47770</name>
    <name type="ORF">MCA23.9</name>
</gene>
<keyword id="KW-0024">Alternative initiation</keyword>
<keyword id="KW-0152">Cholesterol biosynthesis</keyword>
<keyword id="KW-0153">Cholesterol metabolism</keyword>
<keyword id="KW-0963">Cytoplasm</keyword>
<keyword id="KW-0414">Isoprene biosynthesis</keyword>
<keyword id="KW-0444">Lipid biosynthesis</keyword>
<keyword id="KW-0443">Lipid metabolism</keyword>
<keyword id="KW-0460">Magnesium</keyword>
<keyword id="KW-0479">Metal-binding</keyword>
<keyword id="KW-0496">Mitochondrion</keyword>
<keyword id="KW-1185">Reference proteome</keyword>
<keyword id="KW-0752">Steroid biosynthesis</keyword>
<keyword id="KW-0753">Steroid metabolism</keyword>
<keyword id="KW-0756">Sterol biosynthesis</keyword>
<keyword id="KW-1207">Sterol metabolism</keyword>
<keyword id="KW-0808">Transferase</keyword>
<keyword id="KW-0809">Transit peptide</keyword>
<feature type="transit peptide" description="Mitochondrion" evidence="3">
    <location>
        <begin position="1"/>
        <end status="unknown"/>
    </location>
</feature>
<feature type="chain" id="PRO_0000016469" description="Farnesyl pyrophosphate synthase 1, mitochondrial">
    <location>
        <begin status="unknown"/>
        <end position="384"/>
    </location>
</feature>
<feature type="binding site" evidence="2">
    <location>
        <position position="89"/>
    </location>
    <ligand>
        <name>isopentenyl diphosphate</name>
        <dbReference type="ChEBI" id="CHEBI:128769"/>
    </ligand>
</feature>
<feature type="binding site" evidence="2">
    <location>
        <position position="92"/>
    </location>
    <ligand>
        <name>isopentenyl diphosphate</name>
        <dbReference type="ChEBI" id="CHEBI:128769"/>
    </ligand>
</feature>
<feature type="binding site" evidence="2">
    <location>
        <position position="128"/>
    </location>
    <ligand>
        <name>isopentenyl diphosphate</name>
        <dbReference type="ChEBI" id="CHEBI:128769"/>
    </ligand>
</feature>
<feature type="binding site" evidence="2">
    <location>
        <position position="135"/>
    </location>
    <ligand>
        <name>Mg(2+)</name>
        <dbReference type="ChEBI" id="CHEBI:18420"/>
        <label>1</label>
    </ligand>
</feature>
<feature type="binding site" evidence="2">
    <location>
        <position position="135"/>
    </location>
    <ligand>
        <name>Mg(2+)</name>
        <dbReference type="ChEBI" id="CHEBI:18420"/>
        <label>2</label>
    </ligand>
</feature>
<feature type="binding site" evidence="2">
    <location>
        <position position="139"/>
    </location>
    <ligand>
        <name>Mg(2+)</name>
        <dbReference type="ChEBI" id="CHEBI:18420"/>
        <label>1</label>
    </ligand>
</feature>
<feature type="binding site" evidence="2">
    <location>
        <position position="139"/>
    </location>
    <ligand>
        <name>Mg(2+)</name>
        <dbReference type="ChEBI" id="CHEBI:18420"/>
        <label>2</label>
    </ligand>
</feature>
<feature type="binding site" evidence="1">
    <location>
        <position position="144"/>
    </location>
    <ligand>
        <name>dimethylallyl diphosphate</name>
        <dbReference type="ChEBI" id="CHEBI:57623"/>
    </ligand>
</feature>
<feature type="binding site" evidence="2">
    <location>
        <position position="145"/>
    </location>
    <ligand>
        <name>isopentenyl diphosphate</name>
        <dbReference type="ChEBI" id="CHEBI:128769"/>
    </ligand>
</feature>
<feature type="binding site" evidence="1">
    <location>
        <position position="232"/>
    </location>
    <ligand>
        <name>dimethylallyl diphosphate</name>
        <dbReference type="ChEBI" id="CHEBI:57623"/>
    </ligand>
</feature>
<feature type="binding site" evidence="1">
    <location>
        <position position="233"/>
    </location>
    <ligand>
        <name>dimethylallyl diphosphate</name>
        <dbReference type="ChEBI" id="CHEBI:57623"/>
    </ligand>
</feature>
<feature type="binding site" evidence="1">
    <location>
        <position position="271"/>
    </location>
    <ligand>
        <name>dimethylallyl diphosphate</name>
        <dbReference type="ChEBI" id="CHEBI:57623"/>
    </ligand>
</feature>
<feature type="binding site" evidence="1">
    <location>
        <position position="288"/>
    </location>
    <ligand>
        <name>dimethylallyl diphosphate</name>
        <dbReference type="ChEBI" id="CHEBI:57623"/>
    </ligand>
</feature>
<feature type="binding site" evidence="1">
    <location>
        <position position="297"/>
    </location>
    <ligand>
        <name>dimethylallyl diphosphate</name>
        <dbReference type="ChEBI" id="CHEBI:57623"/>
    </ligand>
</feature>
<feature type="splice variant" id="VSP_018808" description="In isoform Cytoplasmic." evidence="4">
    <location>
        <begin position="1"/>
        <end position="41"/>
    </location>
</feature>
<feature type="sequence conflict" description="In Ref. 5; CAA53433." evidence="4" ref="5">
    <original>A</original>
    <variation>S</variation>
    <location>
        <position position="218"/>
    </location>
</feature>
<feature type="sequence conflict" description="In Ref. 5; CAA53433." evidence="4" ref="5">
    <original>Y</original>
    <variation>H</variation>
    <location>
        <position position="231"/>
    </location>
</feature>
<feature type="sequence conflict" description="In Ref. 5; CAA53433." evidence="4" ref="5">
    <original>P</original>
    <variation>T</variation>
    <location>
        <position position="324"/>
    </location>
</feature>